<comment type="function">
    <text evidence="1">Catalyzes a trans-dehydration via an enolate intermediate.</text>
</comment>
<comment type="catalytic activity">
    <reaction evidence="1">
        <text>3-dehydroquinate = 3-dehydroshikimate + H2O</text>
        <dbReference type="Rhea" id="RHEA:21096"/>
        <dbReference type="ChEBI" id="CHEBI:15377"/>
        <dbReference type="ChEBI" id="CHEBI:16630"/>
        <dbReference type="ChEBI" id="CHEBI:32364"/>
        <dbReference type="EC" id="4.2.1.10"/>
    </reaction>
</comment>
<comment type="pathway">
    <text evidence="1">Metabolic intermediate biosynthesis; chorismate biosynthesis; chorismate from D-erythrose 4-phosphate and phosphoenolpyruvate: step 3/7.</text>
</comment>
<comment type="subunit">
    <text evidence="1">Homododecamer.</text>
</comment>
<comment type="similarity">
    <text evidence="1">Belongs to the type-II 3-dehydroquinase family.</text>
</comment>
<gene>
    <name evidence="1" type="primary">aroQ</name>
    <name type="ordered locus">LHK_00597</name>
</gene>
<keyword id="KW-0028">Amino-acid biosynthesis</keyword>
<keyword id="KW-0057">Aromatic amino acid biosynthesis</keyword>
<keyword id="KW-0456">Lyase</keyword>
<keyword id="KW-1185">Reference proteome</keyword>
<proteinExistence type="inferred from homology"/>
<dbReference type="EC" id="4.2.1.10" evidence="1"/>
<dbReference type="EMBL" id="CP001154">
    <property type="protein sequence ID" value="ACO73590.1"/>
    <property type="molecule type" value="Genomic_DNA"/>
</dbReference>
<dbReference type="SMR" id="C1DCV6"/>
<dbReference type="STRING" id="557598.LHK_00597"/>
<dbReference type="KEGG" id="lhk:LHK_00597"/>
<dbReference type="eggNOG" id="COG0757">
    <property type="taxonomic scope" value="Bacteria"/>
</dbReference>
<dbReference type="HOGENOM" id="CLU_090968_1_0_4"/>
<dbReference type="UniPathway" id="UPA00053">
    <property type="reaction ID" value="UER00086"/>
</dbReference>
<dbReference type="Proteomes" id="UP000002010">
    <property type="component" value="Chromosome"/>
</dbReference>
<dbReference type="GO" id="GO:0003855">
    <property type="term" value="F:3-dehydroquinate dehydratase activity"/>
    <property type="evidence" value="ECO:0007669"/>
    <property type="project" value="UniProtKB-UniRule"/>
</dbReference>
<dbReference type="GO" id="GO:0008652">
    <property type="term" value="P:amino acid biosynthetic process"/>
    <property type="evidence" value="ECO:0007669"/>
    <property type="project" value="UniProtKB-KW"/>
</dbReference>
<dbReference type="GO" id="GO:0009073">
    <property type="term" value="P:aromatic amino acid family biosynthetic process"/>
    <property type="evidence" value="ECO:0007669"/>
    <property type="project" value="UniProtKB-KW"/>
</dbReference>
<dbReference type="GO" id="GO:0009423">
    <property type="term" value="P:chorismate biosynthetic process"/>
    <property type="evidence" value="ECO:0007669"/>
    <property type="project" value="UniProtKB-UniRule"/>
</dbReference>
<dbReference type="GO" id="GO:0019631">
    <property type="term" value="P:quinate catabolic process"/>
    <property type="evidence" value="ECO:0007669"/>
    <property type="project" value="TreeGrafter"/>
</dbReference>
<dbReference type="CDD" id="cd00466">
    <property type="entry name" value="DHQase_II"/>
    <property type="match status" value="1"/>
</dbReference>
<dbReference type="Gene3D" id="3.40.50.9100">
    <property type="entry name" value="Dehydroquinase, class II"/>
    <property type="match status" value="1"/>
</dbReference>
<dbReference type="HAMAP" id="MF_00169">
    <property type="entry name" value="AroQ"/>
    <property type="match status" value="1"/>
</dbReference>
<dbReference type="InterPro" id="IPR001874">
    <property type="entry name" value="DHquinase_II"/>
</dbReference>
<dbReference type="InterPro" id="IPR018509">
    <property type="entry name" value="DHquinase_II_CS"/>
</dbReference>
<dbReference type="InterPro" id="IPR036441">
    <property type="entry name" value="DHquinase_II_sf"/>
</dbReference>
<dbReference type="NCBIfam" id="TIGR01088">
    <property type="entry name" value="aroQ"/>
    <property type="match status" value="1"/>
</dbReference>
<dbReference type="NCBIfam" id="NF003804">
    <property type="entry name" value="PRK05395.1-1"/>
    <property type="match status" value="1"/>
</dbReference>
<dbReference type="NCBIfam" id="NF003805">
    <property type="entry name" value="PRK05395.1-2"/>
    <property type="match status" value="1"/>
</dbReference>
<dbReference type="NCBIfam" id="NF003806">
    <property type="entry name" value="PRK05395.1-3"/>
    <property type="match status" value="1"/>
</dbReference>
<dbReference type="NCBIfam" id="NF003807">
    <property type="entry name" value="PRK05395.1-4"/>
    <property type="match status" value="1"/>
</dbReference>
<dbReference type="PANTHER" id="PTHR21272">
    <property type="entry name" value="CATABOLIC 3-DEHYDROQUINASE"/>
    <property type="match status" value="1"/>
</dbReference>
<dbReference type="PANTHER" id="PTHR21272:SF3">
    <property type="entry name" value="CATABOLIC 3-DEHYDROQUINASE"/>
    <property type="match status" value="1"/>
</dbReference>
<dbReference type="Pfam" id="PF01220">
    <property type="entry name" value="DHquinase_II"/>
    <property type="match status" value="1"/>
</dbReference>
<dbReference type="PIRSF" id="PIRSF001399">
    <property type="entry name" value="DHquinase_II"/>
    <property type="match status" value="1"/>
</dbReference>
<dbReference type="SUPFAM" id="SSF52304">
    <property type="entry name" value="Type II 3-dehydroquinate dehydratase"/>
    <property type="match status" value="1"/>
</dbReference>
<dbReference type="PROSITE" id="PS01029">
    <property type="entry name" value="DEHYDROQUINASE_II"/>
    <property type="match status" value="1"/>
</dbReference>
<feature type="chain" id="PRO_1000123693" description="3-dehydroquinate dehydratase">
    <location>
        <begin position="1"/>
        <end position="155"/>
    </location>
</feature>
<feature type="active site" description="Proton acceptor" evidence="1">
    <location>
        <position position="31"/>
    </location>
</feature>
<feature type="active site" description="Proton donor" evidence="1">
    <location>
        <position position="109"/>
    </location>
</feature>
<feature type="binding site" evidence="1">
    <location>
        <position position="83"/>
    </location>
    <ligand>
        <name>substrate</name>
    </ligand>
</feature>
<feature type="binding site" evidence="1">
    <location>
        <position position="89"/>
    </location>
    <ligand>
        <name>substrate</name>
    </ligand>
</feature>
<feature type="binding site" evidence="1">
    <location>
        <position position="96"/>
    </location>
    <ligand>
        <name>substrate</name>
    </ligand>
</feature>
<feature type="binding site" evidence="1">
    <location>
        <begin position="110"/>
        <end position="111"/>
    </location>
    <ligand>
        <name>substrate</name>
    </ligand>
</feature>
<feature type="binding site" evidence="1">
    <location>
        <position position="120"/>
    </location>
    <ligand>
        <name>substrate</name>
    </ligand>
</feature>
<feature type="site" description="Transition state stabilizer" evidence="1">
    <location>
        <position position="26"/>
    </location>
</feature>
<reference key="1">
    <citation type="journal article" date="2009" name="PLoS Genet.">
        <title>The complete genome and proteome of Laribacter hongkongensis reveal potential mechanisms for adaptations to different temperatures and habitats.</title>
        <authorList>
            <person name="Woo P.C.Y."/>
            <person name="Lau S.K.P."/>
            <person name="Tse H."/>
            <person name="Teng J.L.L."/>
            <person name="Curreem S.O."/>
            <person name="Tsang A.K.L."/>
            <person name="Fan R.Y.Y."/>
            <person name="Wong G.K.M."/>
            <person name="Huang Y."/>
            <person name="Loman N.J."/>
            <person name="Snyder L.A.S."/>
            <person name="Cai J.J."/>
            <person name="Huang J.-D."/>
            <person name="Mak W."/>
            <person name="Pallen M.J."/>
            <person name="Lok S."/>
            <person name="Yuen K.-Y."/>
        </authorList>
    </citation>
    <scope>NUCLEOTIDE SEQUENCE [LARGE SCALE GENOMIC DNA]</scope>
    <source>
        <strain>HLHK9</strain>
    </source>
</reference>
<name>AROQ_LARHH</name>
<protein>
    <recommendedName>
        <fullName evidence="1">3-dehydroquinate dehydratase</fullName>
        <shortName evidence="1">3-dehydroquinase</shortName>
        <ecNumber evidence="1">4.2.1.10</ecNumber>
    </recommendedName>
    <alternativeName>
        <fullName evidence="1">Type II DHQase</fullName>
    </alternativeName>
</protein>
<organism>
    <name type="scientific">Laribacter hongkongensis (strain HLHK9)</name>
    <dbReference type="NCBI Taxonomy" id="557598"/>
    <lineage>
        <taxon>Bacteria</taxon>
        <taxon>Pseudomonadati</taxon>
        <taxon>Pseudomonadota</taxon>
        <taxon>Betaproteobacteria</taxon>
        <taxon>Neisseriales</taxon>
        <taxon>Aquaspirillaceae</taxon>
        <taxon>Laribacter</taxon>
    </lineage>
</organism>
<accession>C1DCV6</accession>
<evidence type="ECO:0000255" key="1">
    <source>
        <dbReference type="HAMAP-Rule" id="MF_00169"/>
    </source>
</evidence>
<sequence>MSTKNPSEMPRILVLHGPNLNLLGTREPQHYGADTLDAINARLVARAAASGVACDTFQSNAEYRLIERIHDARTDGTGFIVINPAAFTHTSVALRDALAAVDLPFVEVHLSNVYKREPFRHHSYFSDLAVGVICGLGARGYDHALEHALDTLTAS</sequence>